<gene>
    <name evidence="1" type="primary">glyQ</name>
    <name type="ordered locus">Cla_1002</name>
</gene>
<organism>
    <name type="scientific">Campylobacter lari (strain RM2100 / D67 / ATCC BAA-1060)</name>
    <dbReference type="NCBI Taxonomy" id="306263"/>
    <lineage>
        <taxon>Bacteria</taxon>
        <taxon>Pseudomonadati</taxon>
        <taxon>Campylobacterota</taxon>
        <taxon>Epsilonproteobacteria</taxon>
        <taxon>Campylobacterales</taxon>
        <taxon>Campylobacteraceae</taxon>
        <taxon>Campylobacter</taxon>
    </lineage>
</organism>
<name>SYGA_CAMLR</name>
<sequence>MTFSQMILNLQEFWQKQGCAIMQPYDFPAGAGTFHPATFLRSLGKKPWAAAYVAPSRRPTDGRYGENPNRLGAYYQFQVLIKPSPDNIQELYLKSLENLGFDLKSHDIRFVEDNWESPSLGAWGLGWEVWLDGMEVTQFTYFQQVGGISVDLVSVEITYGLERLAMYLQDVDNVYDIVWNEFNGEKITYKDVHKQGEFEFSKYNFEVSDVKTLNVQFENAYNECKNALEAKLALPAYDYCMLAAHTFNLLDARGAISATQRQDFMLKIRELSKNCALVYKENLDEN</sequence>
<evidence type="ECO:0000255" key="1">
    <source>
        <dbReference type="HAMAP-Rule" id="MF_00254"/>
    </source>
</evidence>
<accession>B9KCN6</accession>
<dbReference type="EC" id="6.1.1.14" evidence="1"/>
<dbReference type="EMBL" id="CP000932">
    <property type="protein sequence ID" value="ACM64325.1"/>
    <property type="molecule type" value="Genomic_DNA"/>
</dbReference>
<dbReference type="RefSeq" id="WP_012661708.1">
    <property type="nucleotide sequence ID" value="NC_012039.1"/>
</dbReference>
<dbReference type="SMR" id="B9KCN6"/>
<dbReference type="STRING" id="306263.Cla_1002"/>
<dbReference type="KEGG" id="cla:CLA_1002"/>
<dbReference type="PATRIC" id="fig|306263.5.peg.986"/>
<dbReference type="eggNOG" id="COG0752">
    <property type="taxonomic scope" value="Bacteria"/>
</dbReference>
<dbReference type="HOGENOM" id="CLU_057066_1_0_7"/>
<dbReference type="Proteomes" id="UP000007727">
    <property type="component" value="Chromosome"/>
</dbReference>
<dbReference type="GO" id="GO:0005829">
    <property type="term" value="C:cytosol"/>
    <property type="evidence" value="ECO:0007669"/>
    <property type="project" value="TreeGrafter"/>
</dbReference>
<dbReference type="GO" id="GO:0005524">
    <property type="term" value="F:ATP binding"/>
    <property type="evidence" value="ECO:0007669"/>
    <property type="project" value="UniProtKB-UniRule"/>
</dbReference>
<dbReference type="GO" id="GO:0004820">
    <property type="term" value="F:glycine-tRNA ligase activity"/>
    <property type="evidence" value="ECO:0007669"/>
    <property type="project" value="UniProtKB-UniRule"/>
</dbReference>
<dbReference type="GO" id="GO:0006426">
    <property type="term" value="P:glycyl-tRNA aminoacylation"/>
    <property type="evidence" value="ECO:0007669"/>
    <property type="project" value="UniProtKB-UniRule"/>
</dbReference>
<dbReference type="CDD" id="cd00733">
    <property type="entry name" value="GlyRS_alpha_core"/>
    <property type="match status" value="1"/>
</dbReference>
<dbReference type="FunFam" id="3.30.930.10:FF:000006">
    <property type="entry name" value="Glycine--tRNA ligase alpha subunit"/>
    <property type="match status" value="1"/>
</dbReference>
<dbReference type="Gene3D" id="3.30.930.10">
    <property type="entry name" value="Bira Bifunctional Protein, Domain 2"/>
    <property type="match status" value="1"/>
</dbReference>
<dbReference type="Gene3D" id="1.20.58.180">
    <property type="entry name" value="Class II aaRS and biotin synthetases, domain 2"/>
    <property type="match status" value="1"/>
</dbReference>
<dbReference type="HAMAP" id="MF_00254">
    <property type="entry name" value="Gly_tRNA_synth_alpha"/>
    <property type="match status" value="1"/>
</dbReference>
<dbReference type="InterPro" id="IPR045864">
    <property type="entry name" value="aa-tRNA-synth_II/BPL/LPL"/>
</dbReference>
<dbReference type="InterPro" id="IPR006194">
    <property type="entry name" value="Gly-tRNA-synth_heterodimer"/>
</dbReference>
<dbReference type="InterPro" id="IPR002310">
    <property type="entry name" value="Gly-tRNA_ligase_asu"/>
</dbReference>
<dbReference type="NCBIfam" id="TIGR00388">
    <property type="entry name" value="glyQ"/>
    <property type="match status" value="1"/>
</dbReference>
<dbReference type="NCBIfam" id="NF006827">
    <property type="entry name" value="PRK09348.1"/>
    <property type="match status" value="1"/>
</dbReference>
<dbReference type="PANTHER" id="PTHR30075:SF2">
    <property type="entry name" value="GLYCINE--TRNA LIGASE, CHLOROPLASTIC_MITOCHONDRIAL 2"/>
    <property type="match status" value="1"/>
</dbReference>
<dbReference type="PANTHER" id="PTHR30075">
    <property type="entry name" value="GLYCYL-TRNA SYNTHETASE"/>
    <property type="match status" value="1"/>
</dbReference>
<dbReference type="Pfam" id="PF02091">
    <property type="entry name" value="tRNA-synt_2e"/>
    <property type="match status" value="1"/>
</dbReference>
<dbReference type="PRINTS" id="PR01044">
    <property type="entry name" value="TRNASYNTHGA"/>
</dbReference>
<dbReference type="SUPFAM" id="SSF55681">
    <property type="entry name" value="Class II aaRS and biotin synthetases"/>
    <property type="match status" value="1"/>
</dbReference>
<dbReference type="PROSITE" id="PS50861">
    <property type="entry name" value="AA_TRNA_LIGASE_II_GLYAB"/>
    <property type="match status" value="1"/>
</dbReference>
<comment type="catalytic activity">
    <reaction evidence="1">
        <text>tRNA(Gly) + glycine + ATP = glycyl-tRNA(Gly) + AMP + diphosphate</text>
        <dbReference type="Rhea" id="RHEA:16013"/>
        <dbReference type="Rhea" id="RHEA-COMP:9664"/>
        <dbReference type="Rhea" id="RHEA-COMP:9683"/>
        <dbReference type="ChEBI" id="CHEBI:30616"/>
        <dbReference type="ChEBI" id="CHEBI:33019"/>
        <dbReference type="ChEBI" id="CHEBI:57305"/>
        <dbReference type="ChEBI" id="CHEBI:78442"/>
        <dbReference type="ChEBI" id="CHEBI:78522"/>
        <dbReference type="ChEBI" id="CHEBI:456215"/>
        <dbReference type="EC" id="6.1.1.14"/>
    </reaction>
</comment>
<comment type="subunit">
    <text evidence="1">Tetramer of two alpha and two beta subunits.</text>
</comment>
<comment type="subcellular location">
    <subcellularLocation>
        <location evidence="1">Cytoplasm</location>
    </subcellularLocation>
</comment>
<comment type="similarity">
    <text evidence="1">Belongs to the class-II aminoacyl-tRNA synthetase family.</text>
</comment>
<feature type="chain" id="PRO_1000125541" description="Glycine--tRNA ligase alpha subunit">
    <location>
        <begin position="1"/>
        <end position="286"/>
    </location>
</feature>
<protein>
    <recommendedName>
        <fullName evidence="1">Glycine--tRNA ligase alpha subunit</fullName>
        <ecNumber evidence="1">6.1.1.14</ecNumber>
    </recommendedName>
    <alternativeName>
        <fullName evidence="1">Glycyl-tRNA synthetase alpha subunit</fullName>
        <shortName evidence="1">GlyRS</shortName>
    </alternativeName>
</protein>
<proteinExistence type="inferred from homology"/>
<reference key="1">
    <citation type="journal article" date="2008" name="Foodborne Pathog. Dis.">
        <title>The complete genome sequence and analysis of the human pathogen Campylobacter lari.</title>
        <authorList>
            <person name="Miller W.G."/>
            <person name="Wang G."/>
            <person name="Binnewies T.T."/>
            <person name="Parker C.T."/>
        </authorList>
    </citation>
    <scope>NUCLEOTIDE SEQUENCE [LARGE SCALE GENOMIC DNA]</scope>
    <source>
        <strain>RM2100 / D67 / ATCC BAA-1060</strain>
    </source>
</reference>
<keyword id="KW-0030">Aminoacyl-tRNA synthetase</keyword>
<keyword id="KW-0067">ATP-binding</keyword>
<keyword id="KW-0963">Cytoplasm</keyword>
<keyword id="KW-0436">Ligase</keyword>
<keyword id="KW-0547">Nucleotide-binding</keyword>
<keyword id="KW-0648">Protein biosynthesis</keyword>
<keyword id="KW-1185">Reference proteome</keyword>